<dbReference type="EC" id="5.1.1.7" evidence="1"/>
<dbReference type="EMBL" id="AE001273">
    <property type="protein sequence ID" value="AAC68027.1"/>
    <property type="molecule type" value="Genomic_DNA"/>
</dbReference>
<dbReference type="PIR" id="F71516">
    <property type="entry name" value="F71516"/>
</dbReference>
<dbReference type="RefSeq" id="NP_219942.1">
    <property type="nucleotide sequence ID" value="NC_000117.1"/>
</dbReference>
<dbReference type="RefSeq" id="WP_009871784.1">
    <property type="nucleotide sequence ID" value="NC_000117.1"/>
</dbReference>
<dbReference type="SMR" id="O84437"/>
<dbReference type="FunCoup" id="O84437">
    <property type="interactions" value="269"/>
</dbReference>
<dbReference type="STRING" id="272561.CT_430"/>
<dbReference type="EnsemblBacteria" id="AAC68027">
    <property type="protein sequence ID" value="AAC68027"/>
    <property type="gene ID" value="CT_430"/>
</dbReference>
<dbReference type="GeneID" id="884681"/>
<dbReference type="KEGG" id="ctr:CT_430"/>
<dbReference type="PATRIC" id="fig|272561.5.peg.465"/>
<dbReference type="HOGENOM" id="CLU_053306_3_2_0"/>
<dbReference type="InParanoid" id="O84437"/>
<dbReference type="OrthoDB" id="9805408at2"/>
<dbReference type="UniPathway" id="UPA00034">
    <property type="reaction ID" value="UER00025"/>
</dbReference>
<dbReference type="Proteomes" id="UP000000431">
    <property type="component" value="Chromosome"/>
</dbReference>
<dbReference type="GO" id="GO:0005829">
    <property type="term" value="C:cytosol"/>
    <property type="evidence" value="ECO:0000318"/>
    <property type="project" value="GO_Central"/>
</dbReference>
<dbReference type="GO" id="GO:0008837">
    <property type="term" value="F:diaminopimelate epimerase activity"/>
    <property type="evidence" value="ECO:0000318"/>
    <property type="project" value="GO_Central"/>
</dbReference>
<dbReference type="GO" id="GO:0009089">
    <property type="term" value="P:lysine biosynthetic process via diaminopimelate"/>
    <property type="evidence" value="ECO:0000318"/>
    <property type="project" value="GO_Central"/>
</dbReference>
<dbReference type="FunFam" id="3.10.310.10:FF:000030">
    <property type="entry name" value="Diaminopimelate epimerase"/>
    <property type="match status" value="1"/>
</dbReference>
<dbReference type="Gene3D" id="3.10.310.10">
    <property type="entry name" value="Diaminopimelate Epimerase, Chain A, domain 1"/>
    <property type="match status" value="2"/>
</dbReference>
<dbReference type="HAMAP" id="MF_00197">
    <property type="entry name" value="DAP_epimerase"/>
    <property type="match status" value="1"/>
</dbReference>
<dbReference type="InterPro" id="IPR053407">
    <property type="entry name" value="DAP_Epimerase"/>
</dbReference>
<dbReference type="InterPro" id="IPR018510">
    <property type="entry name" value="DAP_epimerase_AS"/>
</dbReference>
<dbReference type="InterPro" id="IPR001653">
    <property type="entry name" value="DAP_epimerase_DapF"/>
</dbReference>
<dbReference type="NCBIfam" id="NF038284">
    <property type="entry name" value="bifunc_DapF"/>
    <property type="match status" value="1"/>
</dbReference>
<dbReference type="NCBIfam" id="TIGR00652">
    <property type="entry name" value="DapF"/>
    <property type="match status" value="1"/>
</dbReference>
<dbReference type="PANTHER" id="PTHR31689:SF0">
    <property type="entry name" value="DIAMINOPIMELATE EPIMERASE"/>
    <property type="match status" value="1"/>
</dbReference>
<dbReference type="PANTHER" id="PTHR31689">
    <property type="entry name" value="DIAMINOPIMELATE EPIMERASE, CHLOROPLASTIC"/>
    <property type="match status" value="1"/>
</dbReference>
<dbReference type="Pfam" id="PF01678">
    <property type="entry name" value="DAP_epimerase"/>
    <property type="match status" value="2"/>
</dbReference>
<dbReference type="SUPFAM" id="SSF54506">
    <property type="entry name" value="Diaminopimelate epimerase-like"/>
    <property type="match status" value="2"/>
</dbReference>
<dbReference type="PROSITE" id="PS01326">
    <property type="entry name" value="DAP_EPIMERASE"/>
    <property type="match status" value="1"/>
</dbReference>
<organism>
    <name type="scientific">Chlamydia trachomatis serovar D (strain ATCC VR-885 / DSM 19411 / UW-3/Cx)</name>
    <dbReference type="NCBI Taxonomy" id="272561"/>
    <lineage>
        <taxon>Bacteria</taxon>
        <taxon>Pseudomonadati</taxon>
        <taxon>Chlamydiota</taxon>
        <taxon>Chlamydiia</taxon>
        <taxon>Chlamydiales</taxon>
        <taxon>Chlamydiaceae</taxon>
        <taxon>Chlamydia/Chlamydophila group</taxon>
        <taxon>Chlamydia</taxon>
    </lineage>
</organism>
<accession>O84437</accession>
<reference key="1">
    <citation type="journal article" date="1998" name="Science">
        <title>Genome sequence of an obligate intracellular pathogen of humans: Chlamydia trachomatis.</title>
        <authorList>
            <person name="Stephens R.S."/>
            <person name="Kalman S."/>
            <person name="Lammel C.J."/>
            <person name="Fan J."/>
            <person name="Marathe R."/>
            <person name="Aravind L."/>
            <person name="Mitchell W.P."/>
            <person name="Olinger L."/>
            <person name="Tatusov R.L."/>
            <person name="Zhao Q."/>
            <person name="Koonin E.V."/>
            <person name="Davis R.W."/>
        </authorList>
    </citation>
    <scope>NUCLEOTIDE SEQUENCE [LARGE SCALE GENOMIC DNA]</scope>
    <source>
        <strain>ATCC VR-885 / DSM 19411 / UW-3/Cx</strain>
    </source>
</reference>
<protein>
    <recommendedName>
        <fullName evidence="1">Diaminopimelate epimerase</fullName>
        <shortName evidence="1">DAP epimerase</shortName>
        <ecNumber evidence="1">5.1.1.7</ecNumber>
    </recommendedName>
    <alternativeName>
        <fullName evidence="1">PLP-independent amino acid racemase</fullName>
    </alternativeName>
</protein>
<keyword id="KW-0028">Amino-acid biosynthesis</keyword>
<keyword id="KW-0963">Cytoplasm</keyword>
<keyword id="KW-0413">Isomerase</keyword>
<keyword id="KW-0457">Lysine biosynthesis</keyword>
<keyword id="KW-1185">Reference proteome</keyword>
<gene>
    <name evidence="1" type="primary">dapF</name>
    <name type="ordered locus">CT_430</name>
</gene>
<sequence length="275" mass="30576">MGFSSLLTTCRYLLYSGAGNSFILGESMPSLEDVLFLCQEEMVDGFLCVESSEIADAKLTVFNSDGSIASMCGNGLRCAMAHVAQCFGLEDVSIETERGVYQGKFFSMNRVLVDMTLPDWKKAERKLTHVLPGMPEQVFFIDTGVPHVVVFVSDLSKVPVQEWGSFLRYHEDFAPEGVNVDFVQRKKDDLLLVYTYERGCERETLSCGTGMLASALVAADIFSLGQDFSIAVCSRSRNLIKIFSEKGKVFLEGPVSLLNRSENFGWLEPKSRRFG</sequence>
<comment type="function">
    <text evidence="1">Catalyzes the stereoinversion of LL-2,6-diaminopimelate (L,L-DAP) to meso-diaminopimelate (meso-DAP), a precursor of L-lysine and an essential component of the bacterial peptidoglycan.</text>
</comment>
<comment type="catalytic activity">
    <reaction evidence="1">
        <text>(2S,6S)-2,6-diaminopimelate = meso-2,6-diaminopimelate</text>
        <dbReference type="Rhea" id="RHEA:15393"/>
        <dbReference type="ChEBI" id="CHEBI:57609"/>
        <dbReference type="ChEBI" id="CHEBI:57791"/>
        <dbReference type="EC" id="5.1.1.7"/>
    </reaction>
</comment>
<comment type="pathway">
    <text evidence="1">Amino-acid biosynthesis; L-lysine biosynthesis via DAP pathway; DL-2,6-diaminopimelate from LL-2,6-diaminopimelate: step 1/1.</text>
</comment>
<comment type="subunit">
    <text evidence="1">Homodimer.</text>
</comment>
<comment type="subcellular location">
    <subcellularLocation>
        <location evidence="1">Cytoplasm</location>
    </subcellularLocation>
</comment>
<comment type="similarity">
    <text evidence="1">Belongs to the diaminopimelate epimerase family.</text>
</comment>
<feature type="chain" id="PRO_0000149833" description="Diaminopimelate epimerase">
    <location>
        <begin position="1"/>
        <end position="275"/>
    </location>
</feature>
<feature type="active site" description="Proton donor" evidence="1">
    <location>
        <position position="72"/>
    </location>
</feature>
<feature type="active site" description="Proton acceptor" evidence="1">
    <location>
        <position position="207"/>
    </location>
</feature>
<feature type="binding site" evidence="1">
    <location>
        <position position="20"/>
    </location>
    <ligand>
        <name>substrate</name>
    </ligand>
</feature>
<feature type="binding site" evidence="1">
    <location>
        <position position="63"/>
    </location>
    <ligand>
        <name>substrate</name>
    </ligand>
</feature>
<feature type="binding site" evidence="1">
    <location>
        <begin position="73"/>
        <end position="74"/>
    </location>
    <ligand>
        <name>substrate</name>
    </ligand>
</feature>
<feature type="binding site" evidence="1">
    <location>
        <position position="179"/>
    </location>
    <ligand>
        <name>substrate</name>
    </ligand>
</feature>
<feature type="binding site" evidence="1">
    <location>
        <begin position="197"/>
        <end position="198"/>
    </location>
    <ligand>
        <name>substrate</name>
    </ligand>
</feature>
<feature type="binding site" evidence="1">
    <location>
        <begin position="208"/>
        <end position="209"/>
    </location>
    <ligand>
        <name>substrate</name>
    </ligand>
</feature>
<feature type="site" description="Could be important to modulate the pK values of the two catalytic cysteine residues" evidence="1">
    <location>
        <position position="147"/>
    </location>
</feature>
<feature type="site" description="Could be important to modulate the pK values of the two catalytic cysteine residues" evidence="1">
    <location>
        <position position="197"/>
    </location>
</feature>
<evidence type="ECO:0000255" key="1">
    <source>
        <dbReference type="HAMAP-Rule" id="MF_00197"/>
    </source>
</evidence>
<proteinExistence type="inferred from homology"/>
<name>DAPF_CHLTR</name>